<name>FABH_CHLTE</name>
<sequence length="329" mass="36140">MKAAITTTAKYLPEEIMSNQDLERILDTNDEWITTRTGIKERRILRDPKKATSYMCTEVARQLLEKRGISADEIDLIIVATMSPDMLFPSTACLVQGNIQAKNAWGFDLSAACSGFVYGLYTGAQFIESGNCKKVMVIGADKMSSILDYEDRTTAILFGDGAGGVILEAANEEGYGVLDARLYSDGLNGREHLLMPGGGSLHPASHETVDQHMHFIQQDGKQVFKAAVIAMADVAEEIMQRNNLTAETIDWLVPHQANQRIIHATAERMGITEEKVMMNIARYGNTTAGTVPICLAELDEQGKLHKGSNLVLVSFGAGYTWGGVYVRWQ</sequence>
<protein>
    <recommendedName>
        <fullName evidence="1">Beta-ketoacyl-[acyl-carrier-protein] synthase III</fullName>
        <shortName evidence="1">Beta-ketoacyl-ACP synthase III</shortName>
        <shortName evidence="1">KAS III</shortName>
        <ecNumber evidence="1">2.3.1.180</ecNumber>
    </recommendedName>
    <alternativeName>
        <fullName evidence="1">3-oxoacyl-[acyl-carrier-protein] synthase 3</fullName>
    </alternativeName>
    <alternativeName>
        <fullName evidence="1">3-oxoacyl-[acyl-carrier-protein] synthase III</fullName>
    </alternativeName>
</protein>
<dbReference type="EC" id="2.3.1.180" evidence="1"/>
<dbReference type="EMBL" id="AE006470">
    <property type="protein sequence ID" value="AAM73330.1"/>
    <property type="molecule type" value="Genomic_DNA"/>
</dbReference>
<dbReference type="RefSeq" id="NP_662988.1">
    <property type="nucleotide sequence ID" value="NC_002932.3"/>
</dbReference>
<dbReference type="RefSeq" id="WP_010933768.1">
    <property type="nucleotide sequence ID" value="NC_002932.3"/>
</dbReference>
<dbReference type="SMR" id="Q8KAP2"/>
<dbReference type="STRING" id="194439.CT2114"/>
<dbReference type="EnsemblBacteria" id="AAM73330">
    <property type="protein sequence ID" value="AAM73330"/>
    <property type="gene ID" value="CT2114"/>
</dbReference>
<dbReference type="KEGG" id="cte:CT2114"/>
<dbReference type="PATRIC" id="fig|194439.7.peg.1915"/>
<dbReference type="eggNOG" id="COG0332">
    <property type="taxonomic scope" value="Bacteria"/>
</dbReference>
<dbReference type="HOGENOM" id="CLU_039592_3_1_10"/>
<dbReference type="OrthoDB" id="9815506at2"/>
<dbReference type="UniPathway" id="UPA00094"/>
<dbReference type="Proteomes" id="UP000001007">
    <property type="component" value="Chromosome"/>
</dbReference>
<dbReference type="GO" id="GO:0005737">
    <property type="term" value="C:cytoplasm"/>
    <property type="evidence" value="ECO:0007669"/>
    <property type="project" value="UniProtKB-SubCell"/>
</dbReference>
<dbReference type="GO" id="GO:0004315">
    <property type="term" value="F:3-oxoacyl-[acyl-carrier-protein] synthase activity"/>
    <property type="evidence" value="ECO:0007669"/>
    <property type="project" value="InterPro"/>
</dbReference>
<dbReference type="GO" id="GO:0033818">
    <property type="term" value="F:beta-ketoacyl-acyl-carrier-protein synthase III activity"/>
    <property type="evidence" value="ECO:0007669"/>
    <property type="project" value="UniProtKB-UniRule"/>
</dbReference>
<dbReference type="GO" id="GO:0006633">
    <property type="term" value="P:fatty acid biosynthetic process"/>
    <property type="evidence" value="ECO:0007669"/>
    <property type="project" value="UniProtKB-UniRule"/>
</dbReference>
<dbReference type="GO" id="GO:0044550">
    <property type="term" value="P:secondary metabolite biosynthetic process"/>
    <property type="evidence" value="ECO:0007669"/>
    <property type="project" value="TreeGrafter"/>
</dbReference>
<dbReference type="CDD" id="cd00830">
    <property type="entry name" value="KAS_III"/>
    <property type="match status" value="1"/>
</dbReference>
<dbReference type="FunFam" id="3.40.47.10:FF:000004">
    <property type="entry name" value="3-oxoacyl-[acyl-carrier-protein] synthase 3"/>
    <property type="match status" value="1"/>
</dbReference>
<dbReference type="Gene3D" id="3.40.47.10">
    <property type="match status" value="1"/>
</dbReference>
<dbReference type="HAMAP" id="MF_01815">
    <property type="entry name" value="FabH"/>
    <property type="match status" value="1"/>
</dbReference>
<dbReference type="InterPro" id="IPR013747">
    <property type="entry name" value="ACP_syn_III_C"/>
</dbReference>
<dbReference type="InterPro" id="IPR013751">
    <property type="entry name" value="ACP_syn_III_N"/>
</dbReference>
<dbReference type="InterPro" id="IPR004655">
    <property type="entry name" value="FabH"/>
</dbReference>
<dbReference type="InterPro" id="IPR016039">
    <property type="entry name" value="Thiolase-like"/>
</dbReference>
<dbReference type="NCBIfam" id="TIGR00747">
    <property type="entry name" value="fabH"/>
    <property type="match status" value="1"/>
</dbReference>
<dbReference type="NCBIfam" id="NF006829">
    <property type="entry name" value="PRK09352.1"/>
    <property type="match status" value="1"/>
</dbReference>
<dbReference type="PANTHER" id="PTHR34069">
    <property type="entry name" value="3-OXOACYL-[ACYL-CARRIER-PROTEIN] SYNTHASE 3"/>
    <property type="match status" value="1"/>
</dbReference>
<dbReference type="PANTHER" id="PTHR34069:SF2">
    <property type="entry name" value="BETA-KETOACYL-[ACYL-CARRIER-PROTEIN] SYNTHASE III"/>
    <property type="match status" value="1"/>
</dbReference>
<dbReference type="Pfam" id="PF08545">
    <property type="entry name" value="ACP_syn_III"/>
    <property type="match status" value="1"/>
</dbReference>
<dbReference type="Pfam" id="PF08541">
    <property type="entry name" value="ACP_syn_III_C"/>
    <property type="match status" value="1"/>
</dbReference>
<dbReference type="SUPFAM" id="SSF53901">
    <property type="entry name" value="Thiolase-like"/>
    <property type="match status" value="1"/>
</dbReference>
<feature type="chain" id="PRO_0000110415" description="Beta-ketoacyl-[acyl-carrier-protein] synthase III">
    <location>
        <begin position="1"/>
        <end position="329"/>
    </location>
</feature>
<feature type="region of interest" description="ACP-binding" evidence="1">
    <location>
        <begin position="256"/>
        <end position="260"/>
    </location>
</feature>
<feature type="active site" evidence="1">
    <location>
        <position position="113"/>
    </location>
</feature>
<feature type="active site" evidence="1">
    <location>
        <position position="255"/>
    </location>
</feature>
<feature type="active site" evidence="1">
    <location>
        <position position="285"/>
    </location>
</feature>
<accession>Q8KAP2</accession>
<comment type="function">
    <text evidence="1">Catalyzes the condensation reaction of fatty acid synthesis by the addition to an acyl acceptor of two carbons from malonyl-ACP. Catalyzes the first condensation reaction which initiates fatty acid synthesis and may therefore play a role in governing the total rate of fatty acid production. Possesses both acetoacetyl-ACP synthase and acetyl transacylase activities. Its substrate specificity determines the biosynthesis of branched-chain and/or straight-chain of fatty acids.</text>
</comment>
<comment type="catalytic activity">
    <reaction evidence="1">
        <text>malonyl-[ACP] + acetyl-CoA + H(+) = 3-oxobutanoyl-[ACP] + CO2 + CoA</text>
        <dbReference type="Rhea" id="RHEA:12080"/>
        <dbReference type="Rhea" id="RHEA-COMP:9623"/>
        <dbReference type="Rhea" id="RHEA-COMP:9625"/>
        <dbReference type="ChEBI" id="CHEBI:15378"/>
        <dbReference type="ChEBI" id="CHEBI:16526"/>
        <dbReference type="ChEBI" id="CHEBI:57287"/>
        <dbReference type="ChEBI" id="CHEBI:57288"/>
        <dbReference type="ChEBI" id="CHEBI:78449"/>
        <dbReference type="ChEBI" id="CHEBI:78450"/>
        <dbReference type="EC" id="2.3.1.180"/>
    </reaction>
</comment>
<comment type="pathway">
    <text evidence="1">Lipid metabolism; fatty acid biosynthesis.</text>
</comment>
<comment type="subunit">
    <text evidence="1">Homodimer.</text>
</comment>
<comment type="subcellular location">
    <subcellularLocation>
        <location evidence="1">Cytoplasm</location>
    </subcellularLocation>
</comment>
<comment type="domain">
    <text evidence="1">The last Arg residue of the ACP-binding site is essential for the weak association between ACP/AcpP and FabH.</text>
</comment>
<comment type="similarity">
    <text evidence="1">Belongs to the thiolase-like superfamily. FabH family.</text>
</comment>
<proteinExistence type="inferred from homology"/>
<evidence type="ECO:0000255" key="1">
    <source>
        <dbReference type="HAMAP-Rule" id="MF_01815"/>
    </source>
</evidence>
<reference key="1">
    <citation type="journal article" date="2002" name="Proc. Natl. Acad. Sci. U.S.A.">
        <title>The complete genome sequence of Chlorobium tepidum TLS, a photosynthetic, anaerobic, green-sulfur bacterium.</title>
        <authorList>
            <person name="Eisen J.A."/>
            <person name="Nelson K.E."/>
            <person name="Paulsen I.T."/>
            <person name="Heidelberg J.F."/>
            <person name="Wu M."/>
            <person name="Dodson R.J."/>
            <person name="DeBoy R.T."/>
            <person name="Gwinn M.L."/>
            <person name="Nelson W.C."/>
            <person name="Haft D.H."/>
            <person name="Hickey E.K."/>
            <person name="Peterson J.D."/>
            <person name="Durkin A.S."/>
            <person name="Kolonay J.F."/>
            <person name="Yang F."/>
            <person name="Holt I.E."/>
            <person name="Umayam L.A."/>
            <person name="Mason T.M."/>
            <person name="Brenner M."/>
            <person name="Shea T.P."/>
            <person name="Parksey D.S."/>
            <person name="Nierman W.C."/>
            <person name="Feldblyum T.V."/>
            <person name="Hansen C.L."/>
            <person name="Craven M.B."/>
            <person name="Radune D."/>
            <person name="Vamathevan J.J."/>
            <person name="Khouri H.M."/>
            <person name="White O."/>
            <person name="Gruber T.M."/>
            <person name="Ketchum K.A."/>
            <person name="Venter J.C."/>
            <person name="Tettelin H."/>
            <person name="Bryant D.A."/>
            <person name="Fraser C.M."/>
        </authorList>
    </citation>
    <scope>NUCLEOTIDE SEQUENCE [LARGE SCALE GENOMIC DNA]</scope>
    <source>
        <strain>ATCC 49652 / DSM 12025 / NBRC 103806 / TLS</strain>
    </source>
</reference>
<keyword id="KW-0012">Acyltransferase</keyword>
<keyword id="KW-0963">Cytoplasm</keyword>
<keyword id="KW-0275">Fatty acid biosynthesis</keyword>
<keyword id="KW-0276">Fatty acid metabolism</keyword>
<keyword id="KW-0444">Lipid biosynthesis</keyword>
<keyword id="KW-0443">Lipid metabolism</keyword>
<keyword id="KW-0511">Multifunctional enzyme</keyword>
<keyword id="KW-1185">Reference proteome</keyword>
<keyword id="KW-0808">Transferase</keyword>
<organism>
    <name type="scientific">Chlorobaculum tepidum (strain ATCC 49652 / DSM 12025 / NBRC 103806 / TLS)</name>
    <name type="common">Chlorobium tepidum</name>
    <dbReference type="NCBI Taxonomy" id="194439"/>
    <lineage>
        <taxon>Bacteria</taxon>
        <taxon>Pseudomonadati</taxon>
        <taxon>Chlorobiota</taxon>
        <taxon>Chlorobiia</taxon>
        <taxon>Chlorobiales</taxon>
        <taxon>Chlorobiaceae</taxon>
        <taxon>Chlorobaculum</taxon>
    </lineage>
</organism>
<gene>
    <name evidence="1" type="primary">fabH</name>
    <name type="ordered locus">CT2114</name>
</gene>